<reference key="1">
    <citation type="journal article" date="2002" name="J. Bacteriol.">
        <title>Whole-genome comparison of Mycobacterium tuberculosis clinical and laboratory strains.</title>
        <authorList>
            <person name="Fleischmann R.D."/>
            <person name="Alland D."/>
            <person name="Eisen J.A."/>
            <person name="Carpenter L."/>
            <person name="White O."/>
            <person name="Peterson J.D."/>
            <person name="DeBoy R.T."/>
            <person name="Dodson R.J."/>
            <person name="Gwinn M.L."/>
            <person name="Haft D.H."/>
            <person name="Hickey E.K."/>
            <person name="Kolonay J.F."/>
            <person name="Nelson W.C."/>
            <person name="Umayam L.A."/>
            <person name="Ermolaeva M.D."/>
            <person name="Salzberg S.L."/>
            <person name="Delcher A."/>
            <person name="Utterback T.R."/>
            <person name="Weidman J.F."/>
            <person name="Khouri H.M."/>
            <person name="Gill J."/>
            <person name="Mikula A."/>
            <person name="Bishai W."/>
            <person name="Jacobs W.R. Jr."/>
            <person name="Venter J.C."/>
            <person name="Fraser C.M."/>
        </authorList>
    </citation>
    <scope>NUCLEOTIDE SEQUENCE [LARGE SCALE GENOMIC DNA]</scope>
    <source>
        <strain>CDC 1551 / Oshkosh</strain>
    </source>
</reference>
<proteinExistence type="inferred from homology"/>
<feature type="chain" id="PRO_0000428440" description="Uncharacterized ABC transporter permease MT0078">
    <location>
        <begin position="1"/>
        <end position="349"/>
    </location>
</feature>
<feature type="transmembrane region" description="Helical" evidence="2">
    <location>
        <begin position="16"/>
        <end position="36"/>
    </location>
</feature>
<feature type="transmembrane region" description="Helical" evidence="2">
    <location>
        <begin position="231"/>
        <end position="251"/>
    </location>
</feature>
<feature type="transmembrane region" description="Helical" evidence="2">
    <location>
        <begin position="284"/>
        <end position="304"/>
    </location>
</feature>
<feature type="transmembrane region" description="Helical" evidence="2">
    <location>
        <begin position="307"/>
        <end position="327"/>
    </location>
</feature>
<feature type="region of interest" description="Disordered" evidence="3">
    <location>
        <begin position="111"/>
        <end position="139"/>
    </location>
</feature>
<feature type="compositionally biased region" description="Basic and acidic residues" evidence="3">
    <location>
        <begin position="124"/>
        <end position="134"/>
    </location>
</feature>
<protein>
    <recommendedName>
        <fullName>Uncharacterized ABC transporter permease MT0078</fullName>
    </recommendedName>
</protein>
<keyword id="KW-1003">Cell membrane</keyword>
<keyword id="KW-0472">Membrane</keyword>
<keyword id="KW-1185">Reference proteome</keyword>
<keyword id="KW-0812">Transmembrane</keyword>
<keyword id="KW-1133">Transmembrane helix</keyword>
<keyword id="KW-0813">Transport</keyword>
<evidence type="ECO:0000250" key="1"/>
<evidence type="ECO:0000255" key="2"/>
<evidence type="ECO:0000256" key="3">
    <source>
        <dbReference type="SAM" id="MobiDB-lite"/>
    </source>
</evidence>
<evidence type="ECO:0000305" key="4"/>
<accession>P9WG16</accession>
<accession>L0T2H8</accession>
<accession>O53617</accession>
<accession>Q7DAI3</accession>
<sequence>MLFAALRDMQWRKRRLVITIISTGLIFGMTLVLTGLANGFRVEARHTVDSMGVDVFVVRSGAAGPFLGSIPFPDVDLARVAAEPGVMAAAPLGSVGTIMKEGTSTRNVTVFGAPEHGPGMPRVSEGRSPSKPDEVAASSTMGRHLGDTVEVGARRLRVVGIVPNSTALAKIPNVFLTTEGLQKLAYNGQPNITSIGIIGMPRQLPEGYQTFDRVGAVNDLVRPLKVAVNSISIVAVLLWIVAVLIVGSVVYLSALERLRDFAVFKAIGTPTRSIMAGLALQALVIALLAAVVGVVLAQVLAPLFPMIVAVPVGAYLALPVAAIVIGLFASVAGLKRVVTVDPAQAFGGP</sequence>
<dbReference type="EMBL" id="AE000516">
    <property type="protein sequence ID" value="AAK44302.1"/>
    <property type="molecule type" value="Genomic_DNA"/>
</dbReference>
<dbReference type="PIR" id="A70849">
    <property type="entry name" value="A70849"/>
</dbReference>
<dbReference type="RefSeq" id="WP_003400616.1">
    <property type="nucleotide sequence ID" value="NZ_KK341227.1"/>
</dbReference>
<dbReference type="SMR" id="P9WG16"/>
<dbReference type="KEGG" id="mtc:MT0078"/>
<dbReference type="PATRIC" id="fig|83331.31.peg.83"/>
<dbReference type="HOGENOM" id="CLU_068246_0_0_11"/>
<dbReference type="Proteomes" id="UP000001020">
    <property type="component" value="Chromosome"/>
</dbReference>
<dbReference type="GO" id="GO:0005886">
    <property type="term" value="C:plasma membrane"/>
    <property type="evidence" value="ECO:0007669"/>
    <property type="project" value="UniProtKB-SubCell"/>
</dbReference>
<dbReference type="InterPro" id="IPR051125">
    <property type="entry name" value="ABC-4/HrtB_transporter"/>
</dbReference>
<dbReference type="InterPro" id="IPR003838">
    <property type="entry name" value="ABC3_permease_C"/>
</dbReference>
<dbReference type="InterPro" id="IPR025857">
    <property type="entry name" value="MacB_PCD"/>
</dbReference>
<dbReference type="PANTHER" id="PTHR43738">
    <property type="entry name" value="ABC TRANSPORTER, MEMBRANE PROTEIN"/>
    <property type="match status" value="1"/>
</dbReference>
<dbReference type="PANTHER" id="PTHR43738:SF1">
    <property type="entry name" value="HEMIN TRANSPORT SYSTEM PERMEASE PROTEIN HRTB-RELATED"/>
    <property type="match status" value="1"/>
</dbReference>
<dbReference type="Pfam" id="PF02687">
    <property type="entry name" value="FtsX"/>
    <property type="match status" value="1"/>
</dbReference>
<dbReference type="Pfam" id="PF12704">
    <property type="entry name" value="MacB_PCD"/>
    <property type="match status" value="1"/>
</dbReference>
<organism>
    <name type="scientific">Mycobacterium tuberculosis (strain CDC 1551 / Oshkosh)</name>
    <dbReference type="NCBI Taxonomy" id="83331"/>
    <lineage>
        <taxon>Bacteria</taxon>
        <taxon>Bacillati</taxon>
        <taxon>Actinomycetota</taxon>
        <taxon>Actinomycetes</taxon>
        <taxon>Mycobacteriales</taxon>
        <taxon>Mycobacteriaceae</taxon>
        <taxon>Mycobacterium</taxon>
        <taxon>Mycobacterium tuberculosis complex</taxon>
    </lineage>
</organism>
<name>Y072_MYCTO</name>
<gene>
    <name type="ordered locus">MT0078</name>
</gene>
<comment type="function">
    <text evidence="1">Probably part of an ABC transporter complex. Probably responsible for the translocation of the substrate across the membrane (By similarity).</text>
</comment>
<comment type="subunit">
    <text evidence="4">The complex is composed of two ATP-binding proteins (MT0079), two transmembrane proteins (MT0078) and a solute-binding protein.</text>
</comment>
<comment type="subcellular location">
    <subcellularLocation>
        <location evidence="4">Cell membrane</location>
        <topology evidence="4">Multi-pass membrane protein</topology>
    </subcellularLocation>
</comment>
<comment type="similarity">
    <text evidence="4">Belongs to the ABC-4 integral membrane protein family.</text>
</comment>